<sequence length="430" mass="47235">MFVDQVKISLKAGDGGNGITAYRREKYVPFGGPAGGDGGKGASVVFEVDEGLRTLLDFRYQRHFKASKGENGQSSNMHGKNAEDLVLKVPPGTIIKNVETDEVLADLVEDGQRAVVAKGGRGGRGNSRFATPRNPAPDFSEKGEPGEELDVSLELKLLADVGLVGFPSVGKSTLLSIVSKAKPKIGAYHFTTIKPNLGVVSTPDQRSFVMADLPGLIEGASDGVGLGHQFLRHVERTKVIVHMIDMSGSEGREPIEDYKVINQELAAYEQRLEDRPQIVVANKMDLPESQDNLNLFKEEIGEDVPVIPVSTITRDNIDQLLYAIADKLEEYKDVDFTVEEEESVGINRVLYKHTPSQDKFTISRDDDGAYVVSGNAIERMFKMTDFNSDPAVRRFARQMRSMGIDDALRERGCKNGDIVRILGGEFEFVE</sequence>
<dbReference type="EC" id="3.6.5.-" evidence="1"/>
<dbReference type="EMBL" id="CP000703">
    <property type="protein sequence ID" value="ABQ49491.1"/>
    <property type="molecule type" value="Genomic_DNA"/>
</dbReference>
<dbReference type="SMR" id="A5ITG8"/>
<dbReference type="KEGG" id="saj:SaurJH9_1701"/>
<dbReference type="HOGENOM" id="CLU_011747_2_1_9"/>
<dbReference type="GO" id="GO:0005737">
    <property type="term" value="C:cytoplasm"/>
    <property type="evidence" value="ECO:0007669"/>
    <property type="project" value="UniProtKB-SubCell"/>
</dbReference>
<dbReference type="GO" id="GO:0005525">
    <property type="term" value="F:GTP binding"/>
    <property type="evidence" value="ECO:0007669"/>
    <property type="project" value="UniProtKB-UniRule"/>
</dbReference>
<dbReference type="GO" id="GO:0003924">
    <property type="term" value="F:GTPase activity"/>
    <property type="evidence" value="ECO:0007669"/>
    <property type="project" value="UniProtKB-UniRule"/>
</dbReference>
<dbReference type="GO" id="GO:0000287">
    <property type="term" value="F:magnesium ion binding"/>
    <property type="evidence" value="ECO:0007669"/>
    <property type="project" value="InterPro"/>
</dbReference>
<dbReference type="GO" id="GO:0042254">
    <property type="term" value="P:ribosome biogenesis"/>
    <property type="evidence" value="ECO:0007669"/>
    <property type="project" value="UniProtKB-UniRule"/>
</dbReference>
<dbReference type="CDD" id="cd01898">
    <property type="entry name" value="Obg"/>
    <property type="match status" value="1"/>
</dbReference>
<dbReference type="FunFam" id="2.70.210.12:FF:000001">
    <property type="entry name" value="GTPase Obg"/>
    <property type="match status" value="1"/>
</dbReference>
<dbReference type="FunFam" id="3.40.50.300:FF:000515">
    <property type="entry name" value="GTPase Obg"/>
    <property type="match status" value="1"/>
</dbReference>
<dbReference type="Gene3D" id="3.30.300.350">
    <property type="entry name" value="GTP-binding protein OBG, C-terminal domain"/>
    <property type="match status" value="1"/>
</dbReference>
<dbReference type="Gene3D" id="2.70.210.12">
    <property type="entry name" value="GTP1/OBG domain"/>
    <property type="match status" value="1"/>
</dbReference>
<dbReference type="Gene3D" id="3.40.50.300">
    <property type="entry name" value="P-loop containing nucleotide triphosphate hydrolases"/>
    <property type="match status" value="1"/>
</dbReference>
<dbReference type="HAMAP" id="MF_01454">
    <property type="entry name" value="GTPase_Obg"/>
    <property type="match status" value="1"/>
</dbReference>
<dbReference type="InterPro" id="IPR031167">
    <property type="entry name" value="G_OBG"/>
</dbReference>
<dbReference type="InterPro" id="IPR006073">
    <property type="entry name" value="GTP-bd"/>
</dbReference>
<dbReference type="InterPro" id="IPR014100">
    <property type="entry name" value="GTP-bd_Obg/CgtA"/>
</dbReference>
<dbReference type="InterPro" id="IPR036346">
    <property type="entry name" value="GTP-bd_prot_GTP1/OBG_C_sf"/>
</dbReference>
<dbReference type="InterPro" id="IPR006074">
    <property type="entry name" value="GTP1-OBG_CS"/>
</dbReference>
<dbReference type="InterPro" id="IPR006169">
    <property type="entry name" value="GTP1_OBG_dom"/>
</dbReference>
<dbReference type="InterPro" id="IPR036726">
    <property type="entry name" value="GTP1_OBG_dom_sf"/>
</dbReference>
<dbReference type="InterPro" id="IPR045086">
    <property type="entry name" value="OBG_GTPase"/>
</dbReference>
<dbReference type="InterPro" id="IPR015349">
    <property type="entry name" value="OCT_dom"/>
</dbReference>
<dbReference type="InterPro" id="IPR027417">
    <property type="entry name" value="P-loop_NTPase"/>
</dbReference>
<dbReference type="NCBIfam" id="TIGR02729">
    <property type="entry name" value="Obg_CgtA"/>
    <property type="match status" value="1"/>
</dbReference>
<dbReference type="NCBIfam" id="TIGR03595">
    <property type="entry name" value="Obg_CgtA_exten"/>
    <property type="match status" value="1"/>
</dbReference>
<dbReference type="NCBIfam" id="NF008954">
    <property type="entry name" value="PRK12296.1"/>
    <property type="match status" value="1"/>
</dbReference>
<dbReference type="NCBIfam" id="NF008955">
    <property type="entry name" value="PRK12297.1"/>
    <property type="match status" value="1"/>
</dbReference>
<dbReference type="NCBIfam" id="NF008956">
    <property type="entry name" value="PRK12299.1"/>
    <property type="match status" value="1"/>
</dbReference>
<dbReference type="PANTHER" id="PTHR11702">
    <property type="entry name" value="DEVELOPMENTALLY REGULATED GTP-BINDING PROTEIN-RELATED"/>
    <property type="match status" value="1"/>
</dbReference>
<dbReference type="PANTHER" id="PTHR11702:SF31">
    <property type="entry name" value="MITOCHONDRIAL RIBOSOME-ASSOCIATED GTPASE 2"/>
    <property type="match status" value="1"/>
</dbReference>
<dbReference type="Pfam" id="PF09269">
    <property type="entry name" value="DUF1967"/>
    <property type="match status" value="1"/>
</dbReference>
<dbReference type="Pfam" id="PF01018">
    <property type="entry name" value="GTP1_OBG"/>
    <property type="match status" value="1"/>
</dbReference>
<dbReference type="Pfam" id="PF01926">
    <property type="entry name" value="MMR_HSR1"/>
    <property type="match status" value="1"/>
</dbReference>
<dbReference type="PIRSF" id="PIRSF002401">
    <property type="entry name" value="GTP_bd_Obg/CgtA"/>
    <property type="match status" value="1"/>
</dbReference>
<dbReference type="PRINTS" id="PR00326">
    <property type="entry name" value="GTP1OBG"/>
</dbReference>
<dbReference type="SUPFAM" id="SSF102741">
    <property type="entry name" value="Obg GTP-binding protein C-terminal domain"/>
    <property type="match status" value="1"/>
</dbReference>
<dbReference type="SUPFAM" id="SSF82051">
    <property type="entry name" value="Obg GTP-binding protein N-terminal domain"/>
    <property type="match status" value="1"/>
</dbReference>
<dbReference type="SUPFAM" id="SSF52540">
    <property type="entry name" value="P-loop containing nucleoside triphosphate hydrolases"/>
    <property type="match status" value="1"/>
</dbReference>
<dbReference type="PROSITE" id="PS51710">
    <property type="entry name" value="G_OBG"/>
    <property type="match status" value="1"/>
</dbReference>
<dbReference type="PROSITE" id="PS00905">
    <property type="entry name" value="GTP1_OBG"/>
    <property type="match status" value="1"/>
</dbReference>
<dbReference type="PROSITE" id="PS51883">
    <property type="entry name" value="OBG"/>
    <property type="match status" value="1"/>
</dbReference>
<dbReference type="PROSITE" id="PS51881">
    <property type="entry name" value="OCT"/>
    <property type="match status" value="1"/>
</dbReference>
<comment type="function">
    <text evidence="1">An essential GTPase which binds GTP, GDP and possibly (p)ppGpp with moderate affinity, with high nucleotide exchange rates and a fairly low GTP hydrolysis rate. Plays a role in control of the cell cycle, stress response, ribosome biogenesis and in those bacteria that undergo differentiation, in morphogenesis control.</text>
</comment>
<comment type="cofactor">
    <cofactor evidence="1">
        <name>Mg(2+)</name>
        <dbReference type="ChEBI" id="CHEBI:18420"/>
    </cofactor>
</comment>
<comment type="subunit">
    <text evidence="1">Monomer.</text>
</comment>
<comment type="subcellular location">
    <subcellularLocation>
        <location evidence="1">Cytoplasm</location>
    </subcellularLocation>
</comment>
<comment type="similarity">
    <text evidence="1">Belongs to the TRAFAC class OBG-HflX-like GTPase superfamily. OBG GTPase family.</text>
</comment>
<name>OBG_STAA9</name>
<accession>A5ITG8</accession>
<keyword id="KW-0963">Cytoplasm</keyword>
<keyword id="KW-0342">GTP-binding</keyword>
<keyword id="KW-0378">Hydrolase</keyword>
<keyword id="KW-0460">Magnesium</keyword>
<keyword id="KW-0479">Metal-binding</keyword>
<keyword id="KW-0547">Nucleotide-binding</keyword>
<organism>
    <name type="scientific">Staphylococcus aureus (strain JH9)</name>
    <dbReference type="NCBI Taxonomy" id="359786"/>
    <lineage>
        <taxon>Bacteria</taxon>
        <taxon>Bacillati</taxon>
        <taxon>Bacillota</taxon>
        <taxon>Bacilli</taxon>
        <taxon>Bacillales</taxon>
        <taxon>Staphylococcaceae</taxon>
        <taxon>Staphylococcus</taxon>
    </lineage>
</organism>
<proteinExistence type="inferred from homology"/>
<gene>
    <name evidence="1" type="primary">obg</name>
    <name type="ordered locus">SaurJH9_1701</name>
</gene>
<evidence type="ECO:0000255" key="1">
    <source>
        <dbReference type="HAMAP-Rule" id="MF_01454"/>
    </source>
</evidence>
<evidence type="ECO:0000255" key="2">
    <source>
        <dbReference type="PROSITE-ProRule" id="PRU01229"/>
    </source>
</evidence>
<evidence type="ECO:0000255" key="3">
    <source>
        <dbReference type="PROSITE-ProRule" id="PRU01231"/>
    </source>
</evidence>
<evidence type="ECO:0000256" key="4">
    <source>
        <dbReference type="SAM" id="MobiDB-lite"/>
    </source>
</evidence>
<protein>
    <recommendedName>
        <fullName evidence="1">GTPase Obg</fullName>
        <ecNumber evidence="1">3.6.5.-</ecNumber>
    </recommendedName>
    <alternativeName>
        <fullName evidence="1">GTP-binding protein Obg</fullName>
    </alternativeName>
</protein>
<feature type="chain" id="PRO_0000386271" description="GTPase Obg">
    <location>
        <begin position="1"/>
        <end position="430"/>
    </location>
</feature>
<feature type="domain" description="Obg" evidence="3">
    <location>
        <begin position="1"/>
        <end position="158"/>
    </location>
</feature>
<feature type="domain" description="OBG-type G" evidence="1">
    <location>
        <begin position="159"/>
        <end position="329"/>
    </location>
</feature>
<feature type="domain" description="OCT" evidence="2">
    <location>
        <begin position="352"/>
        <end position="430"/>
    </location>
</feature>
<feature type="region of interest" description="Disordered" evidence="4">
    <location>
        <begin position="118"/>
        <end position="145"/>
    </location>
</feature>
<feature type="binding site" evidence="1">
    <location>
        <begin position="165"/>
        <end position="172"/>
    </location>
    <ligand>
        <name>GTP</name>
        <dbReference type="ChEBI" id="CHEBI:37565"/>
    </ligand>
</feature>
<feature type="binding site" evidence="1">
    <location>
        <position position="172"/>
    </location>
    <ligand>
        <name>Mg(2+)</name>
        <dbReference type="ChEBI" id="CHEBI:18420"/>
    </ligand>
</feature>
<feature type="binding site" evidence="1">
    <location>
        <begin position="190"/>
        <end position="194"/>
    </location>
    <ligand>
        <name>GTP</name>
        <dbReference type="ChEBI" id="CHEBI:37565"/>
    </ligand>
</feature>
<feature type="binding site" evidence="1">
    <location>
        <position position="192"/>
    </location>
    <ligand>
        <name>Mg(2+)</name>
        <dbReference type="ChEBI" id="CHEBI:18420"/>
    </ligand>
</feature>
<feature type="binding site" evidence="1">
    <location>
        <begin position="212"/>
        <end position="215"/>
    </location>
    <ligand>
        <name>GTP</name>
        <dbReference type="ChEBI" id="CHEBI:37565"/>
    </ligand>
</feature>
<feature type="binding site" evidence="1">
    <location>
        <begin position="282"/>
        <end position="285"/>
    </location>
    <ligand>
        <name>GTP</name>
        <dbReference type="ChEBI" id="CHEBI:37565"/>
    </ligand>
</feature>
<feature type="binding site" evidence="1">
    <location>
        <begin position="310"/>
        <end position="312"/>
    </location>
    <ligand>
        <name>GTP</name>
        <dbReference type="ChEBI" id="CHEBI:37565"/>
    </ligand>
</feature>
<reference key="1">
    <citation type="submission" date="2007-05" db="EMBL/GenBank/DDBJ databases">
        <title>Complete sequence of chromosome of Staphylococcus aureus subsp. aureus JH9.</title>
        <authorList>
            <consortium name="US DOE Joint Genome Institute"/>
            <person name="Copeland A."/>
            <person name="Lucas S."/>
            <person name="Lapidus A."/>
            <person name="Barry K."/>
            <person name="Detter J.C."/>
            <person name="Glavina del Rio T."/>
            <person name="Hammon N."/>
            <person name="Israni S."/>
            <person name="Pitluck S."/>
            <person name="Chain P."/>
            <person name="Malfatti S."/>
            <person name="Shin M."/>
            <person name="Vergez L."/>
            <person name="Schmutz J."/>
            <person name="Larimer F."/>
            <person name="Land M."/>
            <person name="Hauser L."/>
            <person name="Kyrpides N."/>
            <person name="Kim E."/>
            <person name="Tomasz A."/>
            <person name="Richardson P."/>
        </authorList>
    </citation>
    <scope>NUCLEOTIDE SEQUENCE [LARGE SCALE GENOMIC DNA]</scope>
    <source>
        <strain>JH9</strain>
    </source>
</reference>